<sequence>MSFEVLEQLESKIQTAVDTITLLQMEVEELKEDKVKLEAEANELRSQREDLEQKAQQAQQEHAQWQERIRALLGKMDEVE</sequence>
<reference key="1">
    <citation type="journal article" date="2003" name="Lancet">
        <title>Genome sequence of Vibrio parahaemolyticus: a pathogenic mechanism distinct from that of V. cholerae.</title>
        <authorList>
            <person name="Makino K."/>
            <person name="Oshima K."/>
            <person name="Kurokawa K."/>
            <person name="Yokoyama K."/>
            <person name="Uda T."/>
            <person name="Tagomori K."/>
            <person name="Iijima Y."/>
            <person name="Najima M."/>
            <person name="Nakano M."/>
            <person name="Yamashita A."/>
            <person name="Kubota Y."/>
            <person name="Kimura S."/>
            <person name="Yasunaga T."/>
            <person name="Honda T."/>
            <person name="Shinagawa H."/>
            <person name="Hattori M."/>
            <person name="Iida T."/>
        </authorList>
    </citation>
    <scope>NUCLEOTIDE SEQUENCE [LARGE SCALE GENOMIC DNA]</scope>
    <source>
        <strain>RIMD 2210633</strain>
    </source>
</reference>
<gene>
    <name evidence="1" type="primary">zapB</name>
    <name type="ordered locus">VP0246</name>
</gene>
<dbReference type="EMBL" id="BA000031">
    <property type="protein sequence ID" value="BAC58509.1"/>
    <property type="molecule type" value="Genomic_DNA"/>
</dbReference>
<dbReference type="RefSeq" id="NP_796625.1">
    <property type="nucleotide sequence ID" value="NC_004603.1"/>
</dbReference>
<dbReference type="RefSeq" id="WP_005481417.1">
    <property type="nucleotide sequence ID" value="NC_004603.1"/>
</dbReference>
<dbReference type="SMR" id="Q87T24"/>
<dbReference type="GeneID" id="1187713"/>
<dbReference type="KEGG" id="vpa:VP0246"/>
<dbReference type="PATRIC" id="fig|223926.6.peg.238"/>
<dbReference type="eggNOG" id="COG3074">
    <property type="taxonomic scope" value="Bacteria"/>
</dbReference>
<dbReference type="HOGENOM" id="CLU_171174_2_0_6"/>
<dbReference type="Proteomes" id="UP000002493">
    <property type="component" value="Chromosome 1"/>
</dbReference>
<dbReference type="GO" id="GO:0005737">
    <property type="term" value="C:cytoplasm"/>
    <property type="evidence" value="ECO:0007669"/>
    <property type="project" value="UniProtKB-SubCell"/>
</dbReference>
<dbReference type="GO" id="GO:0000917">
    <property type="term" value="P:division septum assembly"/>
    <property type="evidence" value="ECO:0007669"/>
    <property type="project" value="UniProtKB-KW"/>
</dbReference>
<dbReference type="GO" id="GO:0043093">
    <property type="term" value="P:FtsZ-dependent cytokinesis"/>
    <property type="evidence" value="ECO:0007669"/>
    <property type="project" value="UniProtKB-UniRule"/>
</dbReference>
<dbReference type="Gene3D" id="1.20.5.340">
    <property type="match status" value="1"/>
</dbReference>
<dbReference type="HAMAP" id="MF_01196">
    <property type="entry name" value="ZapB"/>
    <property type="match status" value="1"/>
</dbReference>
<dbReference type="InterPro" id="IPR009252">
    <property type="entry name" value="Cell_div_ZapB"/>
</dbReference>
<dbReference type="Pfam" id="PF06005">
    <property type="entry name" value="ZapB"/>
    <property type="match status" value="1"/>
</dbReference>
<comment type="function">
    <text evidence="1">Non-essential, abundant cell division factor that is required for proper Z-ring formation. It is recruited early to the divisome by direct interaction with FtsZ, stimulating Z-ring assembly and thereby promoting cell division earlier in the cell cycle. Its recruitment to the Z-ring requires functional FtsA or ZipA.</text>
</comment>
<comment type="subunit">
    <text evidence="1">Homodimer. The ends of the coiled-coil dimer bind to each other, forming polymers. Interacts with FtsZ.</text>
</comment>
<comment type="subcellular location">
    <subcellularLocation>
        <location>Cytoplasm</location>
    </subcellularLocation>
    <text evidence="1">Localizes to the septum at mid-cell, in a FtsZ-like pattern.</text>
</comment>
<comment type="similarity">
    <text evidence="1">Belongs to the ZapB family.</text>
</comment>
<proteinExistence type="inferred from homology"/>
<organism>
    <name type="scientific">Vibrio parahaemolyticus serotype O3:K6 (strain RIMD 2210633)</name>
    <dbReference type="NCBI Taxonomy" id="223926"/>
    <lineage>
        <taxon>Bacteria</taxon>
        <taxon>Pseudomonadati</taxon>
        <taxon>Pseudomonadota</taxon>
        <taxon>Gammaproteobacteria</taxon>
        <taxon>Vibrionales</taxon>
        <taxon>Vibrionaceae</taxon>
        <taxon>Vibrio</taxon>
    </lineage>
</organism>
<keyword id="KW-0131">Cell cycle</keyword>
<keyword id="KW-0132">Cell division</keyword>
<keyword id="KW-0175">Coiled coil</keyword>
<keyword id="KW-0963">Cytoplasm</keyword>
<keyword id="KW-0717">Septation</keyword>
<feature type="chain" id="PRO_0000333942" description="Cell division protein ZapB">
    <location>
        <begin position="1"/>
        <end position="80"/>
    </location>
</feature>
<feature type="coiled-coil region" evidence="1">
    <location>
        <begin position="3"/>
        <end position="80"/>
    </location>
</feature>
<accession>Q87T24</accession>
<evidence type="ECO:0000255" key="1">
    <source>
        <dbReference type="HAMAP-Rule" id="MF_01196"/>
    </source>
</evidence>
<name>ZAPB_VIBPA</name>
<protein>
    <recommendedName>
        <fullName evidence="1">Cell division protein ZapB</fullName>
    </recommendedName>
</protein>